<gene>
    <name type="primary">STIPL2</name>
    <name type="ordered locus">At2g42330</name>
</gene>
<evidence type="ECO:0000250" key="1"/>
<evidence type="ECO:0000255" key="2"/>
<evidence type="ECO:0000255" key="3">
    <source>
        <dbReference type="PROSITE-ProRule" id="PRU00092"/>
    </source>
</evidence>
<evidence type="ECO:0000256" key="4">
    <source>
        <dbReference type="SAM" id="MobiDB-lite"/>
    </source>
</evidence>
<evidence type="ECO:0000269" key="5">
    <source>
    </source>
</evidence>
<evidence type="ECO:0000305" key="6"/>
<comment type="function">
    <text evidence="1">Involved in pre-mRNA splicing, specifically in spliceosome disassembly during late-stage splicing events.</text>
</comment>
<comment type="subunit">
    <text evidence="1">Identified in the spliceosome C complex.</text>
</comment>
<comment type="subcellular location">
    <subcellularLocation>
        <location evidence="1">Nucleus</location>
    </subcellularLocation>
</comment>
<comment type="disruption phenotype">
    <text evidence="5">No visible phenotype under normal growth conditions.</text>
</comment>
<comment type="similarity">
    <text evidence="6">Belongs to the TFP11/STIP family.</text>
</comment>
<reference key="1">
    <citation type="journal article" date="1999" name="Nature">
        <title>Sequence and analysis of chromosome 2 of the plant Arabidopsis thaliana.</title>
        <authorList>
            <person name="Lin X."/>
            <person name="Kaul S."/>
            <person name="Rounsley S.D."/>
            <person name="Shea T.P."/>
            <person name="Benito M.-I."/>
            <person name="Town C.D."/>
            <person name="Fujii C.Y."/>
            <person name="Mason T.M."/>
            <person name="Bowman C.L."/>
            <person name="Barnstead M.E."/>
            <person name="Feldblyum T.V."/>
            <person name="Buell C.R."/>
            <person name="Ketchum K.A."/>
            <person name="Lee J.J."/>
            <person name="Ronning C.M."/>
            <person name="Koo H.L."/>
            <person name="Moffat K.S."/>
            <person name="Cronin L.A."/>
            <person name="Shen M."/>
            <person name="Pai G."/>
            <person name="Van Aken S."/>
            <person name="Umayam L."/>
            <person name="Tallon L.J."/>
            <person name="Gill J.E."/>
            <person name="Adams M.D."/>
            <person name="Carrera A.J."/>
            <person name="Creasy T.H."/>
            <person name="Goodman H.M."/>
            <person name="Somerville C.R."/>
            <person name="Copenhaver G.P."/>
            <person name="Preuss D."/>
            <person name="Nierman W.C."/>
            <person name="White O."/>
            <person name="Eisen J.A."/>
            <person name="Salzberg S.L."/>
            <person name="Fraser C.M."/>
            <person name="Venter J.C."/>
        </authorList>
    </citation>
    <scope>NUCLEOTIDE SEQUENCE [LARGE SCALE GENOMIC DNA]</scope>
    <source>
        <strain>cv. Columbia</strain>
    </source>
</reference>
<reference key="2">
    <citation type="journal article" date="2017" name="Plant J.">
        <title>Araport11: a complete reannotation of the Arabidopsis thaliana reference genome.</title>
        <authorList>
            <person name="Cheng C.Y."/>
            <person name="Krishnakumar V."/>
            <person name="Chan A.P."/>
            <person name="Thibaud-Nissen F."/>
            <person name="Schobel S."/>
            <person name="Town C.D."/>
        </authorList>
    </citation>
    <scope>GENOME REANNOTATION</scope>
    <source>
        <strain>cv. Columbia</strain>
    </source>
</reference>
<reference key="3">
    <citation type="journal article" date="2002" name="Plant Physiol.">
        <title>Cloning and sequencing of cDNAs for hypothetical genes from chromosome 2 of Arabidopsis.</title>
        <authorList>
            <person name="Xiao Y.-L."/>
            <person name="Malik M."/>
            <person name="Whitelaw C.A."/>
            <person name="Town C.D."/>
        </authorList>
    </citation>
    <scope>NUCLEOTIDE SEQUENCE [LARGE SCALE MRNA] OF 203-752</scope>
    <source>
        <strain>cv. Columbia</strain>
    </source>
</reference>
<reference key="4">
    <citation type="journal article" date="2012" name="Plant Cell">
        <title>Mutation of Arabidopsis spliceosomal timekeeper locus1 causes circadian clock defects.</title>
        <authorList>
            <person name="Jones M.A."/>
            <person name="Williams B.A."/>
            <person name="McNicol J."/>
            <person name="Simpson C.G."/>
            <person name="Brown J.W."/>
            <person name="Harmer S.L."/>
        </authorList>
    </citation>
    <scope>DISRUPTION PHENOTYPE</scope>
</reference>
<sequence>MGDEGKKEKRRQTKEDAVYGFVFESDSNSDDSGGSRRKKRRKTKPVKFSSAGNIDQVLKQNRGNCKIDENDDTILPIALGKKIADKAHVREKNNKKENFEKFSGGIGMKLLEKMGYKGRGLGKNQQGIVAPIEVQLRPKNMGMGYNDFKEKNAPLFPCLNKVEEKKKSVVVTVSENHGDGRRDLWKKKNVRKEVYITAEEFLGKKQEEGFGCDQLIIDKRGPQDRVVNSLRNLYAEEKATDANVQQPELQHNLRFIVKSLEHGILKTDKDLRNEKGLALSLQQEKEKFKMGVKKQKTLFDNLGYVAEEIDRIEVEIASGNLTLDSLANRFKDLRSSYPDDYKCCNLSCIASSLALPLFIRMFQGWDPLSDAEHGIEAISSWKMLLEVEDNQSISTPYSQLVSEVILPAVRVSGINTWEPRDPEPMLRLLETWEKMLPSLIFETILTTVVLPKLSIAIESWEPRLETVPIHFWVHPWLPVLGQKLESAYQIIRMKFGNLLDAWHPSDVSVHTILSPWKTVFDAASWEQLMRRYIVPKLQVALQEFQINPADQNLDEFNLVMGWVSSVPIHLMTDLMERFFFPKWLDVLYHWLCSEPKFDEIMKWFLGWKGTFPQELSANRRIEIQFKRGLDMAREAVERMEMSQPGARENISYHKAQEQRQSEGRAKVQAQVDDPEELSFKEAVELFAQEKELLLKPKPHRMHNGLQIYRFGNVSVLLDSANSKLLAQEEGRWFPVDLDSLLKMHYSAVTGKQ</sequence>
<name>STIP2_ARATH</name>
<proteinExistence type="evidence at transcript level"/>
<organism>
    <name type="scientific">Arabidopsis thaliana</name>
    <name type="common">Mouse-ear cress</name>
    <dbReference type="NCBI Taxonomy" id="3702"/>
    <lineage>
        <taxon>Eukaryota</taxon>
        <taxon>Viridiplantae</taxon>
        <taxon>Streptophyta</taxon>
        <taxon>Embryophyta</taxon>
        <taxon>Tracheophyta</taxon>
        <taxon>Spermatophyta</taxon>
        <taxon>Magnoliopsida</taxon>
        <taxon>eudicotyledons</taxon>
        <taxon>Gunneridae</taxon>
        <taxon>Pentapetalae</taxon>
        <taxon>rosids</taxon>
        <taxon>malvids</taxon>
        <taxon>Brassicales</taxon>
        <taxon>Brassicaceae</taxon>
        <taxon>Camelineae</taxon>
        <taxon>Arabidopsis</taxon>
    </lineage>
</organism>
<feature type="chain" id="PRO_0000429431" description="Septin and tuftelin-interacting protein 1 homolog 2">
    <location>
        <begin position="1"/>
        <end position="752"/>
    </location>
</feature>
<feature type="domain" description="G-patch" evidence="3">
    <location>
        <begin position="103"/>
        <end position="148"/>
    </location>
</feature>
<feature type="region of interest" description="Disordered" evidence="4">
    <location>
        <begin position="1"/>
        <end position="52"/>
    </location>
</feature>
<feature type="short sequence motif" description="Nuclear localization signal" evidence="2">
    <location>
        <begin position="36"/>
        <end position="48"/>
    </location>
</feature>
<feature type="compositionally biased region" description="Basic and acidic residues" evidence="4">
    <location>
        <begin position="1"/>
        <end position="17"/>
    </location>
</feature>
<feature type="compositionally biased region" description="Basic residues" evidence="4">
    <location>
        <begin position="35"/>
        <end position="45"/>
    </location>
</feature>
<feature type="sequence conflict" description="In Ref. 3; AY429349." evidence="6" ref="3">
    <original>D</original>
    <variation>V</variation>
    <location>
        <position position="268"/>
    </location>
</feature>
<feature type="sequence conflict" description="In Ref. 3; AY429349." evidence="6" ref="3">
    <original>K</original>
    <variation>E</variation>
    <location>
        <position position="331"/>
    </location>
</feature>
<feature type="sequence conflict" description="In Ref. 3; AY429349." evidence="6" ref="3">
    <original>S</original>
    <variation>P</variation>
    <location>
        <position position="564"/>
    </location>
</feature>
<feature type="sequence conflict" description="In Ref. 3; AY429349." evidence="6" ref="3">
    <original>H</original>
    <variation>R</variation>
    <location>
        <position position="744"/>
    </location>
</feature>
<protein>
    <recommendedName>
        <fullName>Septin and tuftelin-interacting protein 1 homolog 2</fullName>
    </recommendedName>
    <alternativeName>
        <fullName>Protein SPLICEOSOMAL TIMEKEEPER LOCUS 2</fullName>
    </alternativeName>
</protein>
<dbReference type="EMBL" id="AC005956">
    <property type="protein sequence ID" value="AAD23716.1"/>
    <property type="molecule type" value="Genomic_DNA"/>
</dbReference>
<dbReference type="EMBL" id="CP002685">
    <property type="protein sequence ID" value="AEC10107.1"/>
    <property type="molecule type" value="Genomic_DNA"/>
</dbReference>
<dbReference type="EMBL" id="CP002685">
    <property type="protein sequence ID" value="AEC10108.1"/>
    <property type="molecule type" value="Genomic_DNA"/>
</dbReference>
<dbReference type="EMBL" id="CP002685">
    <property type="protein sequence ID" value="ANM62879.1"/>
    <property type="molecule type" value="Genomic_DNA"/>
</dbReference>
<dbReference type="EMBL" id="AY429349">
    <property type="status" value="NOT_ANNOTATED_CDS"/>
    <property type="molecule type" value="mRNA"/>
</dbReference>
<dbReference type="PIR" id="F84852">
    <property type="entry name" value="F84852"/>
</dbReference>
<dbReference type="RefSeq" id="NP_001078041.1">
    <property type="nucleotide sequence ID" value="NM_001084572.3"/>
</dbReference>
<dbReference type="RefSeq" id="NP_001325005.1">
    <property type="nucleotide sequence ID" value="NM_001336968.1"/>
</dbReference>
<dbReference type="RefSeq" id="NP_181762.1">
    <property type="nucleotide sequence ID" value="NM_129795.4"/>
</dbReference>
<dbReference type="SMR" id="Q9SLC6"/>
<dbReference type="FunCoup" id="Q9SLC6">
    <property type="interactions" value="3913"/>
</dbReference>
<dbReference type="STRING" id="3702.Q9SLC6"/>
<dbReference type="iPTMnet" id="Q9SLC6"/>
<dbReference type="PaxDb" id="3702-AT2G42330.2"/>
<dbReference type="ProteomicsDB" id="228266"/>
<dbReference type="EnsemblPlants" id="AT2G42330.1">
    <property type="protein sequence ID" value="AT2G42330.1"/>
    <property type="gene ID" value="AT2G42330"/>
</dbReference>
<dbReference type="EnsemblPlants" id="AT2G42330.2">
    <property type="protein sequence ID" value="AT2G42330.2"/>
    <property type="gene ID" value="AT2G42330"/>
</dbReference>
<dbReference type="EnsemblPlants" id="AT2G42330.3">
    <property type="protein sequence ID" value="AT2G42330.3"/>
    <property type="gene ID" value="AT2G42330"/>
</dbReference>
<dbReference type="GeneID" id="818834"/>
<dbReference type="Gramene" id="AT2G42330.1">
    <property type="protein sequence ID" value="AT2G42330.1"/>
    <property type="gene ID" value="AT2G42330"/>
</dbReference>
<dbReference type="Gramene" id="AT2G42330.2">
    <property type="protein sequence ID" value="AT2G42330.2"/>
    <property type="gene ID" value="AT2G42330"/>
</dbReference>
<dbReference type="Gramene" id="AT2G42330.3">
    <property type="protein sequence ID" value="AT2G42330.3"/>
    <property type="gene ID" value="AT2G42330"/>
</dbReference>
<dbReference type="KEGG" id="ath:AT2G42330"/>
<dbReference type="Araport" id="AT2G42330"/>
<dbReference type="TAIR" id="AT2G42330">
    <property type="gene designation" value="TMK4"/>
</dbReference>
<dbReference type="eggNOG" id="KOG2184">
    <property type="taxonomic scope" value="Eukaryota"/>
</dbReference>
<dbReference type="HOGENOM" id="CLU_007977_1_0_1"/>
<dbReference type="InParanoid" id="Q9SLC6"/>
<dbReference type="OMA" id="WEPRLET"/>
<dbReference type="PhylomeDB" id="Q9SLC6"/>
<dbReference type="PRO" id="PR:Q9SLC6"/>
<dbReference type="Proteomes" id="UP000006548">
    <property type="component" value="Chromosome 2"/>
</dbReference>
<dbReference type="ExpressionAtlas" id="Q9SLC6">
    <property type="expression patterns" value="baseline and differential"/>
</dbReference>
<dbReference type="GO" id="GO:0005681">
    <property type="term" value="C:spliceosomal complex"/>
    <property type="evidence" value="ECO:0007669"/>
    <property type="project" value="UniProtKB-KW"/>
</dbReference>
<dbReference type="GO" id="GO:0003677">
    <property type="term" value="F:DNA binding"/>
    <property type="evidence" value="ECO:0007669"/>
    <property type="project" value="UniProtKB-KW"/>
</dbReference>
<dbReference type="GO" id="GO:0004674">
    <property type="term" value="F:protein serine/threonine kinase activity"/>
    <property type="evidence" value="ECO:0000314"/>
    <property type="project" value="TAIR"/>
</dbReference>
<dbReference type="GO" id="GO:0006468">
    <property type="term" value="P:protein phosphorylation"/>
    <property type="evidence" value="ECO:0000314"/>
    <property type="project" value="TAIR"/>
</dbReference>
<dbReference type="GO" id="GO:0010600">
    <property type="term" value="P:regulation of auxin biosynthetic process"/>
    <property type="evidence" value="ECO:0000314"/>
    <property type="project" value="TAIR"/>
</dbReference>
<dbReference type="GO" id="GO:0000390">
    <property type="term" value="P:spliceosomal complex disassembly"/>
    <property type="evidence" value="ECO:0007669"/>
    <property type="project" value="InterPro"/>
</dbReference>
<dbReference type="InterPro" id="IPR000467">
    <property type="entry name" value="G_patch_dom"/>
</dbReference>
<dbReference type="InterPro" id="IPR022783">
    <property type="entry name" value="GCFC_dom"/>
</dbReference>
<dbReference type="InterPro" id="IPR022159">
    <property type="entry name" value="STIP/TFIP11_N"/>
</dbReference>
<dbReference type="InterPro" id="IPR045211">
    <property type="entry name" value="TFP11/STIP/Ntr1"/>
</dbReference>
<dbReference type="PANTHER" id="PTHR23329:SF1">
    <property type="entry name" value="TUFTELIN-INTERACTING PROTEIN 11"/>
    <property type="match status" value="1"/>
</dbReference>
<dbReference type="PANTHER" id="PTHR23329">
    <property type="entry name" value="TUFTELIN-INTERACTING PROTEIN 11-RELATED"/>
    <property type="match status" value="1"/>
</dbReference>
<dbReference type="Pfam" id="PF01585">
    <property type="entry name" value="G-patch"/>
    <property type="match status" value="1"/>
</dbReference>
<dbReference type="Pfam" id="PF07842">
    <property type="entry name" value="GCFC"/>
    <property type="match status" value="1"/>
</dbReference>
<dbReference type="Pfam" id="PF12457">
    <property type="entry name" value="TIP_N"/>
    <property type="match status" value="1"/>
</dbReference>
<dbReference type="SMART" id="SM00443">
    <property type="entry name" value="G_patch"/>
    <property type="match status" value="1"/>
</dbReference>
<dbReference type="PROSITE" id="PS50174">
    <property type="entry name" value="G_PATCH"/>
    <property type="match status" value="1"/>
</dbReference>
<keyword id="KW-0238">DNA-binding</keyword>
<keyword id="KW-0507">mRNA processing</keyword>
<keyword id="KW-0508">mRNA splicing</keyword>
<keyword id="KW-0539">Nucleus</keyword>
<keyword id="KW-1185">Reference proteome</keyword>
<keyword id="KW-0747">Spliceosome</keyword>
<accession>Q9SLC6</accession>